<organism>
    <name type="scientific">Manduca sexta</name>
    <name type="common">Tobacco hawkmoth</name>
    <name type="synonym">Tobacco hornworm</name>
    <dbReference type="NCBI Taxonomy" id="7130"/>
    <lineage>
        <taxon>Eukaryota</taxon>
        <taxon>Metazoa</taxon>
        <taxon>Ecdysozoa</taxon>
        <taxon>Arthropoda</taxon>
        <taxon>Hexapoda</taxon>
        <taxon>Insecta</taxon>
        <taxon>Pterygota</taxon>
        <taxon>Neoptera</taxon>
        <taxon>Endopterygota</taxon>
        <taxon>Lepidoptera</taxon>
        <taxon>Glossata</taxon>
        <taxon>Ditrysia</taxon>
        <taxon>Bombycoidea</taxon>
        <taxon>Sphingidae</taxon>
        <taxon>Sphinginae</taxon>
        <taxon>Sphingini</taxon>
        <taxon>Manduca</taxon>
    </lineage>
</organism>
<reference key="1">
    <citation type="journal article" date="1987" name="J. Biol. Chem.">
        <title>Primary structure and comparative sequence analysis of an insect apolipoprotein. Apolipophorin-III from Manduca sexta.</title>
        <authorList>
            <person name="Cole K.D."/>
            <person name="Warnakulasuriya F.G.J.P."/>
            <person name="Boguski M.S."/>
            <person name="Freeman M."/>
            <person name="Gordon J.I."/>
            <person name="Clark W.A."/>
            <person name="Law J.H."/>
            <person name="Wells M.A."/>
        </authorList>
    </citation>
    <scope>NUCLEOTIDE SEQUENCE [MRNA]</scope>
    <scope>PARTIAL PROTEIN SEQUENCE</scope>
</reference>
<reference key="2">
    <citation type="journal article" date="1991" name="Insect Biochem.">
        <title>The structure of the apolipophorin-III gene from Manduca sexta.</title>
        <authorList>
            <person name="Cole K.D."/>
            <person name="Smith A.F."/>
            <person name="Wells M.A."/>
        </authorList>
    </citation>
    <scope>NUCLEOTIDE SEQUENCE [GENOMIC DNA]</scope>
</reference>
<reference key="3">
    <citation type="journal article" date="2002" name="Proc. Natl. Acad. Sci. U.S.A.">
        <title>Structural basis for the conformational adaptability of apolipophorin III, a helix-bundle exchangeable apolipoprotein.</title>
        <authorList>
            <person name="Wang J."/>
            <person name="Sykes B.D."/>
            <person name="Ryan R.O."/>
        </authorList>
    </citation>
    <scope>STRUCTURE BY NMR OF 24-189</scope>
</reference>
<comment type="function">
    <text>Assists in the loading of diacylglycerol, generated from triacylglycerol stores in the fat body through the action of adipokinetic hormone, into lipophorin, the hemolymph lipoprotein. It increases the lipid carrying capacity of lipophorin by covering the expanding hydrophobic surface resulting from diacylglycerol uptake. It thus plays a critical role in the transport of lipids during flight in several species of insects.</text>
</comment>
<comment type="subunit">
    <text>Equilibrium between a soluble monomer and a bound lipoprotein form. Apolipophorin-3 associates with lipophorin during lipid loading until each particle contains 9 or 14 molecules of apolipophorin-3.</text>
</comment>
<comment type="subcellular location">
    <subcellularLocation>
        <location>Secreted</location>
    </subcellularLocation>
</comment>
<comment type="tissue specificity">
    <text>Hemolymph.</text>
</comment>
<comment type="similarity">
    <text evidence="2">Belongs to the insect apolipophorin-3 family.</text>
</comment>
<comment type="online information" name="Protein Spotlight">
    <link uri="https://www.proteinspotlight.org/back_issues/059"/>
    <text>Lipid freight - Issue 59 of June 2005</text>
</comment>
<accession>P13276</accession>
<name>APL3_MANSE</name>
<proteinExistence type="evidence at protein level"/>
<dbReference type="EMBL" id="M17286">
    <property type="protein sequence ID" value="AAA29301.1"/>
    <property type="molecule type" value="mRNA"/>
</dbReference>
<dbReference type="EMBL" id="M79326">
    <property type="protein sequence ID" value="AAA29300.1"/>
    <property type="molecule type" value="Genomic_DNA"/>
</dbReference>
<dbReference type="PIR" id="A29793">
    <property type="entry name" value="A29793"/>
</dbReference>
<dbReference type="RefSeq" id="XP_030032406.2">
    <property type="nucleotide sequence ID" value="XM_030176546.2"/>
</dbReference>
<dbReference type="PDB" id="1EQ1">
    <property type="method" value="NMR"/>
    <property type="chains" value="A=24-189"/>
</dbReference>
<dbReference type="PDBsum" id="1EQ1"/>
<dbReference type="SMR" id="P13276"/>
<dbReference type="EnsemblMetazoa" id="XM_030176546.2">
    <property type="protein sequence ID" value="XP_030032406.2"/>
    <property type="gene ID" value="LOC115448921"/>
</dbReference>
<dbReference type="GeneID" id="115448921"/>
<dbReference type="OrthoDB" id="8115237at2759"/>
<dbReference type="EvolutionaryTrace" id="P13276"/>
<dbReference type="GO" id="GO:0005576">
    <property type="term" value="C:extracellular region"/>
    <property type="evidence" value="ECO:0007669"/>
    <property type="project" value="UniProtKB-SubCell"/>
</dbReference>
<dbReference type="GO" id="GO:0008289">
    <property type="term" value="F:lipid binding"/>
    <property type="evidence" value="ECO:0007669"/>
    <property type="project" value="InterPro"/>
</dbReference>
<dbReference type="GO" id="GO:0006869">
    <property type="term" value="P:lipid transport"/>
    <property type="evidence" value="ECO:0007669"/>
    <property type="project" value="UniProtKB-KW"/>
</dbReference>
<dbReference type="CDD" id="cd13769">
    <property type="entry name" value="ApoLp-III_like"/>
    <property type="match status" value="1"/>
</dbReference>
<dbReference type="Gene3D" id="1.20.120.20">
    <property type="entry name" value="Apolipoprotein"/>
    <property type="match status" value="1"/>
</dbReference>
<dbReference type="InterPro" id="IPR010009">
    <property type="entry name" value="ApoLp-III"/>
</dbReference>
<dbReference type="Pfam" id="PF07464">
    <property type="entry name" value="ApoLp-III"/>
    <property type="match status" value="1"/>
</dbReference>
<dbReference type="SUPFAM" id="SSF47857">
    <property type="entry name" value="Apolipophorin-III"/>
    <property type="match status" value="1"/>
</dbReference>
<protein>
    <recommendedName>
        <fullName>Apolipophorin-3</fullName>
    </recommendedName>
    <alternativeName>
        <fullName>Apolipophorin-III</fullName>
        <shortName>ApoLp-III</shortName>
    </alternativeName>
</protein>
<feature type="signal peptide" evidence="1">
    <location>
        <begin position="1"/>
        <end position="18"/>
    </location>
</feature>
<feature type="propeptide" id="PRO_0000002047">
    <location>
        <begin position="19"/>
        <end position="23"/>
    </location>
</feature>
<feature type="chain" id="PRO_0000002048" description="Apolipophorin-3">
    <location>
        <begin position="24"/>
        <end position="189"/>
    </location>
</feature>
<feature type="strand" evidence="3">
    <location>
        <begin position="26"/>
        <end position="28"/>
    </location>
</feature>
<feature type="helix" evidence="3">
    <location>
        <begin position="34"/>
        <end position="53"/>
    </location>
</feature>
<feature type="helix" evidence="3">
    <location>
        <begin position="64"/>
        <end position="88"/>
    </location>
</feature>
<feature type="helix" evidence="3">
    <location>
        <begin position="95"/>
        <end position="111"/>
    </location>
</feature>
<feature type="helix" evidence="3">
    <location>
        <begin position="112"/>
        <end position="115"/>
    </location>
</feature>
<feature type="helix" evidence="3">
    <location>
        <begin position="118"/>
        <end position="122"/>
    </location>
</feature>
<feature type="strand" evidence="3">
    <location>
        <begin position="125"/>
        <end position="127"/>
    </location>
</feature>
<feature type="helix" evidence="3">
    <location>
        <begin position="128"/>
        <end position="150"/>
    </location>
</feature>
<feature type="helix" evidence="3">
    <location>
        <begin position="158"/>
        <end position="160"/>
    </location>
</feature>
<feature type="helix" evidence="3">
    <location>
        <begin position="161"/>
        <end position="185"/>
    </location>
</feature>
<keyword id="KW-0002">3D-structure</keyword>
<keyword id="KW-0165">Cleavage on pair of basic residues</keyword>
<keyword id="KW-0903">Direct protein sequencing</keyword>
<keyword id="KW-0445">Lipid transport</keyword>
<keyword id="KW-0677">Repeat</keyword>
<keyword id="KW-0964">Secreted</keyword>
<keyword id="KW-0732">Signal</keyword>
<keyword id="KW-0813">Transport</keyword>
<evidence type="ECO:0000255" key="1"/>
<evidence type="ECO:0000305" key="2"/>
<evidence type="ECO:0007829" key="3">
    <source>
        <dbReference type="PDB" id="1EQ1"/>
    </source>
</evidence>
<sequence length="189" mass="20793">MAAKFVVVLAACVALSHSAMVRRDAPAGGNAFEEMEKHAKEFQKTFSEQFNSLVNSKNTQDFNKALKDGSDSVLQQLSAFSSSLQGAISDANGKAKEALEQARQNVEKTAEELRKAHPDVEKEANAFKDKLQAAVQTTVQESQKLAKEVASNMEETNKKLAPKIKQAYDDFVKHAEEVQKKLHEAATKQ</sequence>